<feature type="chain" id="PRO_0000456091" description="Toxin Cbi1">
    <location>
        <begin position="1"/>
        <end position="65"/>
    </location>
</feature>
<feature type="domain" description="LCN-type CS-alpha/beta" evidence="2">
    <location>
        <begin position="1"/>
        <end position="64"/>
    </location>
</feature>
<feature type="disulfide bond" evidence="2">
    <location>
        <begin position="11"/>
        <end position="63"/>
    </location>
</feature>
<feature type="disulfide bond" evidence="2">
    <location>
        <begin position="15"/>
        <end position="37"/>
    </location>
</feature>
<feature type="disulfide bond" evidence="2">
    <location>
        <begin position="22"/>
        <end position="44"/>
    </location>
</feature>
<feature type="disulfide bond" evidence="2">
    <location>
        <begin position="26"/>
        <end position="46"/>
    </location>
</feature>
<dbReference type="SMR" id="C0HLZ3"/>
<dbReference type="GO" id="GO:0005576">
    <property type="term" value="C:extracellular region"/>
    <property type="evidence" value="ECO:0000314"/>
    <property type="project" value="UniProtKB"/>
</dbReference>
<dbReference type="GO" id="GO:0019871">
    <property type="term" value="F:sodium channel inhibitor activity"/>
    <property type="evidence" value="ECO:0007669"/>
    <property type="project" value="InterPro"/>
</dbReference>
<dbReference type="GO" id="GO:0090729">
    <property type="term" value="F:toxin activity"/>
    <property type="evidence" value="ECO:0007669"/>
    <property type="project" value="UniProtKB-KW"/>
</dbReference>
<dbReference type="GO" id="GO:0006952">
    <property type="term" value="P:defense response"/>
    <property type="evidence" value="ECO:0007669"/>
    <property type="project" value="InterPro"/>
</dbReference>
<dbReference type="CDD" id="cd23106">
    <property type="entry name" value="neurotoxins_LC_scorpion"/>
    <property type="match status" value="1"/>
</dbReference>
<dbReference type="FunFam" id="3.30.30.10:FF:000002">
    <property type="entry name" value="Alpha-like toxin BmK-M1"/>
    <property type="match status" value="1"/>
</dbReference>
<dbReference type="Gene3D" id="3.30.30.10">
    <property type="entry name" value="Knottin, scorpion toxin-like"/>
    <property type="match status" value="1"/>
</dbReference>
<dbReference type="InterPro" id="IPR044062">
    <property type="entry name" value="LCN-type_CS_alpha_beta_dom"/>
</dbReference>
<dbReference type="InterPro" id="IPR003614">
    <property type="entry name" value="Scorpion_toxin-like"/>
</dbReference>
<dbReference type="InterPro" id="IPR036574">
    <property type="entry name" value="Scorpion_toxin-like_sf"/>
</dbReference>
<dbReference type="InterPro" id="IPR018218">
    <property type="entry name" value="Scorpion_toxinL"/>
</dbReference>
<dbReference type="InterPro" id="IPR002061">
    <property type="entry name" value="Scorpion_toxinL/defensin"/>
</dbReference>
<dbReference type="Pfam" id="PF00537">
    <property type="entry name" value="Toxin_3"/>
    <property type="match status" value="1"/>
</dbReference>
<dbReference type="PRINTS" id="PR00285">
    <property type="entry name" value="SCORPNTOXIN"/>
</dbReference>
<dbReference type="SMART" id="SM00505">
    <property type="entry name" value="Knot1"/>
    <property type="match status" value="1"/>
</dbReference>
<dbReference type="SUPFAM" id="SSF57095">
    <property type="entry name" value="Scorpion toxin-like"/>
    <property type="match status" value="1"/>
</dbReference>
<dbReference type="PROSITE" id="PS51863">
    <property type="entry name" value="LCN_CSAB"/>
    <property type="match status" value="1"/>
</dbReference>
<name>SCX1_CENBC</name>
<reference evidence="5" key="1">
    <citation type="journal article" date="2022" name="Toxicon X">
        <title>Heterologous expression of four recombinant toxins from Panamanian scorpions of the genus Tityus and Centruroides for production of antivenom.</title>
        <authorList>
            <person name="Salazar M.H."/>
            <person name="Clement H."/>
            <person name="Corrales-Garcia L.L."/>
            <person name="Sanchez J."/>
            <person name="Cleghorn J."/>
            <person name="Zamudio F."/>
            <person name="Possani L.D."/>
            <person name="Acosta H."/>
            <person name="Corzo G."/>
        </authorList>
    </citation>
    <scope>NUCLEOTIDE SEQUENCE [MRNA]</scope>
    <scope>PROTEIN SEQUENCE OF 1-25</scope>
    <scope>SUBCELLULAR LOCATION</scope>
    <scope>TISSUE SPECIFICITY</scope>
    <scope>MASS SPECTROMETRY</scope>
    <source>
        <tissue>Venom</tissue>
        <tissue evidence="4">Venom gland</tissue>
    </source>
</reference>
<sequence length="65" mass="7494">KDGYPMDNKGCKIACVINNQYCETECVTVLKGKKGYCYFWKLACYCEGLPNWAKVWDRATNKCRA</sequence>
<proteinExistence type="evidence at protein level"/>
<accession>C0HLZ3</accession>
<comment type="function">
    <text evidence="1">Beta toxins bind voltage-independently at site-4 of sodium channels (Nav) and shift the voltage of activation toward more negative potentials thereby affecting sodium channel activation and promoting spontaneous and repetitive firing.</text>
</comment>
<comment type="subcellular location">
    <subcellularLocation>
        <location evidence="3">Secreted</location>
    </subcellularLocation>
</comment>
<comment type="tissue specificity">
    <text evidence="3">Expressed by the venom gland.</text>
</comment>
<comment type="domain">
    <text evidence="5">Has the structural arrangement of an alpha-helix connected to antiparallel beta-sheets by disulfide bonds (CS-alpha/beta).</text>
</comment>
<comment type="mass spectrometry" mass="7485.7" method="Electrospray" evidence="3">
    <text>Average mass.</text>
</comment>
<comment type="similarity">
    <text evidence="5">Belongs to the long (4 C-C) scorpion toxin superfamily. Sodium channel inhibitor family. Beta subfamily.</text>
</comment>
<protein>
    <recommendedName>
        <fullName evidence="4">Toxin Cbi1</fullName>
    </recommendedName>
</protein>
<keyword id="KW-0903">Direct protein sequencing</keyword>
<keyword id="KW-1015">Disulfide bond</keyword>
<keyword id="KW-0872">Ion channel impairing toxin</keyword>
<keyword id="KW-0528">Neurotoxin</keyword>
<keyword id="KW-0964">Secreted</keyword>
<keyword id="KW-0800">Toxin</keyword>
<keyword id="KW-0738">Voltage-gated sodium channel impairing toxin</keyword>
<organism evidence="4">
    <name type="scientific">Centruroides bicolor</name>
    <name type="common">Scorpion</name>
    <dbReference type="NCBI Taxonomy" id="2565416"/>
    <lineage>
        <taxon>Eukaryota</taxon>
        <taxon>Metazoa</taxon>
        <taxon>Ecdysozoa</taxon>
        <taxon>Arthropoda</taxon>
        <taxon>Chelicerata</taxon>
        <taxon>Arachnida</taxon>
        <taxon>Scorpiones</taxon>
        <taxon>Buthida</taxon>
        <taxon>Buthoidea</taxon>
        <taxon>Buthidae</taxon>
        <taxon>Centruroides</taxon>
    </lineage>
</organism>
<evidence type="ECO:0000250" key="1">
    <source>
        <dbReference type="UniProtKB" id="F1CGT6"/>
    </source>
</evidence>
<evidence type="ECO:0000255" key="2">
    <source>
        <dbReference type="PROSITE-ProRule" id="PRU01210"/>
    </source>
</evidence>
<evidence type="ECO:0000269" key="3">
    <source>
    </source>
</evidence>
<evidence type="ECO:0000303" key="4">
    <source>
    </source>
</evidence>
<evidence type="ECO:0000305" key="5"/>